<name>UPPP_PSEAE</name>
<comment type="function">
    <text evidence="1">Catalyzes the dephosphorylation of undecaprenyl diphosphate (UPP). Confers resistance to bacitracin.</text>
</comment>
<comment type="catalytic activity">
    <reaction evidence="1">
        <text>di-trans,octa-cis-undecaprenyl diphosphate + H2O = di-trans,octa-cis-undecaprenyl phosphate + phosphate + H(+)</text>
        <dbReference type="Rhea" id="RHEA:28094"/>
        <dbReference type="ChEBI" id="CHEBI:15377"/>
        <dbReference type="ChEBI" id="CHEBI:15378"/>
        <dbReference type="ChEBI" id="CHEBI:43474"/>
        <dbReference type="ChEBI" id="CHEBI:58405"/>
        <dbReference type="ChEBI" id="CHEBI:60392"/>
        <dbReference type="EC" id="3.6.1.27"/>
    </reaction>
</comment>
<comment type="subcellular location">
    <subcellularLocation>
        <location evidence="1">Cell inner membrane</location>
        <topology evidence="1">Multi-pass membrane protein</topology>
    </subcellularLocation>
</comment>
<comment type="miscellaneous">
    <text>Bacitracin is thought to be involved in the inhibition of peptidoglycan synthesis by sequestering undecaprenyl diphosphate, thereby reducing the pool of lipid carrier available.</text>
</comment>
<comment type="similarity">
    <text evidence="1">Belongs to the UppP family.</text>
</comment>
<accession>Q9I2E5</accession>
<proteinExistence type="inferred from homology"/>
<sequence length="277" mass="30724">MEWWTAFQAFILGVVEGLTEFLPISSTGHQIIVADLIGFGGERAKAFNIIIQLAAILAVVWEFRGKIFQVVRDLPSQRQAQRFTANLLIAFFPAVVLGVLFADLIHEWLFNPITVALALVVGGVVMLWAERRKHVIRAEHVDDMTWKDALKIGCAQCLAMIPGTSRSGATIIGGLLFGLSRKAATEFSFFLAMPTMVGAAVYSGYVYRDLFRPEDLPVFAVGFVTSFVFAMLAVRALLKFIGNHSYAAFAWYRIAFGLLILATWQFHLIDWSTAGEV</sequence>
<feature type="chain" id="PRO_0000151181" description="Undecaprenyl-diphosphatase">
    <location>
        <begin position="1"/>
        <end position="277"/>
    </location>
</feature>
<feature type="transmembrane region" description="Helical" evidence="1">
    <location>
        <begin position="47"/>
        <end position="67"/>
    </location>
</feature>
<feature type="transmembrane region" description="Helical" evidence="1">
    <location>
        <begin position="85"/>
        <end position="105"/>
    </location>
</feature>
<feature type="transmembrane region" description="Helical" evidence="1">
    <location>
        <begin position="108"/>
        <end position="128"/>
    </location>
</feature>
<feature type="transmembrane region" description="Helical" evidence="1">
    <location>
        <begin position="187"/>
        <end position="207"/>
    </location>
</feature>
<feature type="transmembrane region" description="Helical" evidence="1">
    <location>
        <begin position="218"/>
        <end position="238"/>
    </location>
</feature>
<feature type="transmembrane region" description="Helical" evidence="1">
    <location>
        <begin position="249"/>
        <end position="269"/>
    </location>
</feature>
<evidence type="ECO:0000255" key="1">
    <source>
        <dbReference type="HAMAP-Rule" id="MF_01006"/>
    </source>
</evidence>
<gene>
    <name evidence="1" type="primary">uppP</name>
    <name type="synonym">bacA</name>
    <name type="synonym">upk</name>
    <name type="ordered locus">PA1959</name>
</gene>
<organism>
    <name type="scientific">Pseudomonas aeruginosa (strain ATCC 15692 / DSM 22644 / CIP 104116 / JCM 14847 / LMG 12228 / 1C / PRS 101 / PAO1)</name>
    <dbReference type="NCBI Taxonomy" id="208964"/>
    <lineage>
        <taxon>Bacteria</taxon>
        <taxon>Pseudomonadati</taxon>
        <taxon>Pseudomonadota</taxon>
        <taxon>Gammaproteobacteria</taxon>
        <taxon>Pseudomonadales</taxon>
        <taxon>Pseudomonadaceae</taxon>
        <taxon>Pseudomonas</taxon>
    </lineage>
</organism>
<reference key="1">
    <citation type="journal article" date="2000" name="Nature">
        <title>Complete genome sequence of Pseudomonas aeruginosa PAO1, an opportunistic pathogen.</title>
        <authorList>
            <person name="Stover C.K."/>
            <person name="Pham X.-Q.T."/>
            <person name="Erwin A.L."/>
            <person name="Mizoguchi S.D."/>
            <person name="Warrener P."/>
            <person name="Hickey M.J."/>
            <person name="Brinkman F.S.L."/>
            <person name="Hufnagle W.O."/>
            <person name="Kowalik D.J."/>
            <person name="Lagrou M."/>
            <person name="Garber R.L."/>
            <person name="Goltry L."/>
            <person name="Tolentino E."/>
            <person name="Westbrock-Wadman S."/>
            <person name="Yuan Y."/>
            <person name="Brody L.L."/>
            <person name="Coulter S.N."/>
            <person name="Folger K.R."/>
            <person name="Kas A."/>
            <person name="Larbig K."/>
            <person name="Lim R.M."/>
            <person name="Smith K.A."/>
            <person name="Spencer D.H."/>
            <person name="Wong G.K.-S."/>
            <person name="Wu Z."/>
            <person name="Paulsen I.T."/>
            <person name="Reizer J."/>
            <person name="Saier M.H. Jr."/>
            <person name="Hancock R.E.W."/>
            <person name="Lory S."/>
            <person name="Olson M.V."/>
        </authorList>
    </citation>
    <scope>NUCLEOTIDE SEQUENCE [LARGE SCALE GENOMIC DNA]</scope>
    <source>
        <strain>ATCC 15692 / DSM 22644 / CIP 104116 / JCM 14847 / LMG 12228 / 1C / PRS 101 / PAO1</strain>
    </source>
</reference>
<keyword id="KW-0046">Antibiotic resistance</keyword>
<keyword id="KW-0997">Cell inner membrane</keyword>
<keyword id="KW-1003">Cell membrane</keyword>
<keyword id="KW-0133">Cell shape</keyword>
<keyword id="KW-0961">Cell wall biogenesis/degradation</keyword>
<keyword id="KW-0378">Hydrolase</keyword>
<keyword id="KW-0472">Membrane</keyword>
<keyword id="KW-0573">Peptidoglycan synthesis</keyword>
<keyword id="KW-1185">Reference proteome</keyword>
<keyword id="KW-0812">Transmembrane</keyword>
<keyword id="KW-1133">Transmembrane helix</keyword>
<protein>
    <recommendedName>
        <fullName evidence="1">Undecaprenyl-diphosphatase</fullName>
        <ecNumber evidence="1">3.6.1.27</ecNumber>
    </recommendedName>
    <alternativeName>
        <fullName evidence="1">Bacitracin resistance protein</fullName>
    </alternativeName>
    <alternativeName>
        <fullName evidence="1">Undecaprenyl pyrophosphate phosphatase</fullName>
    </alternativeName>
</protein>
<dbReference type="EC" id="3.6.1.27" evidence="1"/>
<dbReference type="EMBL" id="AE004091">
    <property type="protein sequence ID" value="AAG05347.1"/>
    <property type="molecule type" value="Genomic_DNA"/>
</dbReference>
<dbReference type="PIR" id="F83401">
    <property type="entry name" value="F83401"/>
</dbReference>
<dbReference type="RefSeq" id="NP_250649.1">
    <property type="nucleotide sequence ID" value="NC_002516.2"/>
</dbReference>
<dbReference type="RefSeq" id="WP_003113476.1">
    <property type="nucleotide sequence ID" value="NZ_QZGE01000030.1"/>
</dbReference>
<dbReference type="SMR" id="Q9I2E5"/>
<dbReference type="FunCoup" id="Q9I2E5">
    <property type="interactions" value="409"/>
</dbReference>
<dbReference type="STRING" id="208964.PA1959"/>
<dbReference type="PaxDb" id="208964-PA1959"/>
<dbReference type="GeneID" id="877690"/>
<dbReference type="KEGG" id="pae:PA1959"/>
<dbReference type="PATRIC" id="fig|208964.12.peg.2042"/>
<dbReference type="PseudoCAP" id="PA1959"/>
<dbReference type="HOGENOM" id="CLU_060296_2_0_6"/>
<dbReference type="InParanoid" id="Q9I2E5"/>
<dbReference type="OrthoDB" id="9808289at2"/>
<dbReference type="PhylomeDB" id="Q9I2E5"/>
<dbReference type="BioCyc" id="PAER208964:G1FZ6-1997-MONOMER"/>
<dbReference type="Proteomes" id="UP000002438">
    <property type="component" value="Chromosome"/>
</dbReference>
<dbReference type="GO" id="GO:0005886">
    <property type="term" value="C:plasma membrane"/>
    <property type="evidence" value="ECO:0000318"/>
    <property type="project" value="GO_Central"/>
</dbReference>
<dbReference type="GO" id="GO:0050380">
    <property type="term" value="F:undecaprenyl-diphosphatase activity"/>
    <property type="evidence" value="ECO:0000318"/>
    <property type="project" value="GO_Central"/>
</dbReference>
<dbReference type="GO" id="GO:0071555">
    <property type="term" value="P:cell wall organization"/>
    <property type="evidence" value="ECO:0007669"/>
    <property type="project" value="UniProtKB-KW"/>
</dbReference>
<dbReference type="GO" id="GO:0009252">
    <property type="term" value="P:peptidoglycan biosynthetic process"/>
    <property type="evidence" value="ECO:0007669"/>
    <property type="project" value="UniProtKB-KW"/>
</dbReference>
<dbReference type="GO" id="GO:0000270">
    <property type="term" value="P:peptidoglycan metabolic process"/>
    <property type="evidence" value="ECO:0000318"/>
    <property type="project" value="GO_Central"/>
</dbReference>
<dbReference type="GO" id="GO:0008360">
    <property type="term" value="P:regulation of cell shape"/>
    <property type="evidence" value="ECO:0007669"/>
    <property type="project" value="UniProtKB-KW"/>
</dbReference>
<dbReference type="GO" id="GO:0046677">
    <property type="term" value="P:response to antibiotic"/>
    <property type="evidence" value="ECO:0007669"/>
    <property type="project" value="UniProtKB-UniRule"/>
</dbReference>
<dbReference type="HAMAP" id="MF_01006">
    <property type="entry name" value="Undec_diphosphatase"/>
    <property type="match status" value="1"/>
</dbReference>
<dbReference type="InterPro" id="IPR003824">
    <property type="entry name" value="UppP"/>
</dbReference>
<dbReference type="NCBIfam" id="NF001389">
    <property type="entry name" value="PRK00281.1-2"/>
    <property type="match status" value="1"/>
</dbReference>
<dbReference type="NCBIfam" id="NF001390">
    <property type="entry name" value="PRK00281.1-4"/>
    <property type="match status" value="1"/>
</dbReference>
<dbReference type="NCBIfam" id="TIGR00753">
    <property type="entry name" value="undec_PP_bacA"/>
    <property type="match status" value="1"/>
</dbReference>
<dbReference type="PANTHER" id="PTHR30622">
    <property type="entry name" value="UNDECAPRENYL-DIPHOSPHATASE"/>
    <property type="match status" value="1"/>
</dbReference>
<dbReference type="PANTHER" id="PTHR30622:SF3">
    <property type="entry name" value="UNDECAPRENYL-DIPHOSPHATASE"/>
    <property type="match status" value="1"/>
</dbReference>
<dbReference type="Pfam" id="PF02673">
    <property type="entry name" value="BacA"/>
    <property type="match status" value="1"/>
</dbReference>